<accession>Q7RTS3</accession>
<accession>Q9HC25</accession>
<name>PTF1A_HUMAN</name>
<dbReference type="EMBL" id="AL139281">
    <property type="status" value="NOT_ANNOTATED_CDS"/>
    <property type="molecule type" value="Genomic_DNA"/>
</dbReference>
<dbReference type="EMBL" id="AF181999">
    <property type="protein sequence ID" value="AAG09441.1"/>
    <property type="molecule type" value="mRNA"/>
</dbReference>
<dbReference type="EMBL" id="BK000272">
    <property type="protein sequence ID" value="DAA01052.1"/>
    <property type="molecule type" value="Genomic_DNA"/>
</dbReference>
<dbReference type="CCDS" id="CCDS7143.1"/>
<dbReference type="RefSeq" id="NP_835455.1">
    <property type="nucleotide sequence ID" value="NM_178161.3"/>
</dbReference>
<dbReference type="SMR" id="Q7RTS3"/>
<dbReference type="BioGRID" id="129154">
    <property type="interactions" value="14"/>
</dbReference>
<dbReference type="CORUM" id="Q7RTS3"/>
<dbReference type="FunCoup" id="Q7RTS3">
    <property type="interactions" value="354"/>
</dbReference>
<dbReference type="STRING" id="9606.ENSP00000365687"/>
<dbReference type="iPTMnet" id="Q7RTS3"/>
<dbReference type="PhosphoSitePlus" id="Q7RTS3"/>
<dbReference type="BioMuta" id="PTF1A"/>
<dbReference type="DMDM" id="74749931"/>
<dbReference type="jPOST" id="Q7RTS3"/>
<dbReference type="MassIVE" id="Q7RTS3"/>
<dbReference type="PaxDb" id="9606-ENSP00000365687"/>
<dbReference type="PeptideAtlas" id="Q7RTS3"/>
<dbReference type="ProteomicsDB" id="68892"/>
<dbReference type="Antibodypedia" id="25762">
    <property type="antibodies" value="412 antibodies from 31 providers"/>
</dbReference>
<dbReference type="DNASU" id="256297"/>
<dbReference type="Ensembl" id="ENST00000376504.4">
    <property type="protein sequence ID" value="ENSP00000365687.3"/>
    <property type="gene ID" value="ENSG00000168267.7"/>
</dbReference>
<dbReference type="GeneID" id="256297"/>
<dbReference type="KEGG" id="hsa:256297"/>
<dbReference type="MANE-Select" id="ENST00000376504.4">
    <property type="protein sequence ID" value="ENSP00000365687.3"/>
    <property type="RefSeq nucleotide sequence ID" value="NM_178161.3"/>
    <property type="RefSeq protein sequence ID" value="NP_835455.1"/>
</dbReference>
<dbReference type="UCSC" id="uc001irp.4">
    <property type="organism name" value="human"/>
</dbReference>
<dbReference type="AGR" id="HGNC:23734"/>
<dbReference type="CTD" id="256297"/>
<dbReference type="DisGeNET" id="256297"/>
<dbReference type="GeneCards" id="PTF1A"/>
<dbReference type="GeneReviews" id="PTF1A"/>
<dbReference type="HGNC" id="HGNC:23734">
    <property type="gene designation" value="PTF1A"/>
</dbReference>
<dbReference type="HPA" id="ENSG00000168267">
    <property type="expression patterns" value="Tissue enriched (pancreas)"/>
</dbReference>
<dbReference type="MalaCards" id="PTF1A"/>
<dbReference type="MIM" id="607194">
    <property type="type" value="gene"/>
</dbReference>
<dbReference type="MIM" id="609069">
    <property type="type" value="phenotype"/>
</dbReference>
<dbReference type="MIM" id="615935">
    <property type="type" value="phenotype"/>
</dbReference>
<dbReference type="neXtProt" id="NX_Q7RTS3"/>
<dbReference type="OpenTargets" id="ENSG00000168267"/>
<dbReference type="Orphanet" id="2805">
    <property type="disease" value="Partial pancreatic agenesis"/>
</dbReference>
<dbReference type="Orphanet" id="65288">
    <property type="disease" value="Permanent neonatal diabetes mellitus-pancreatic and cerebellar agenesis syndrome"/>
</dbReference>
<dbReference type="PharmGKB" id="PA134864129"/>
<dbReference type="VEuPathDB" id="HostDB:ENSG00000168267"/>
<dbReference type="eggNOG" id="KOG4029">
    <property type="taxonomic scope" value="Eukaryota"/>
</dbReference>
<dbReference type="GeneTree" id="ENSGT00940000161000"/>
<dbReference type="HOGENOM" id="CLU_053709_0_0_1"/>
<dbReference type="InParanoid" id="Q7RTS3"/>
<dbReference type="OMA" id="GYCCEAA"/>
<dbReference type="OrthoDB" id="10048995at2759"/>
<dbReference type="PAN-GO" id="Q7RTS3">
    <property type="GO annotations" value="4 GO annotations based on evolutionary models"/>
</dbReference>
<dbReference type="PhylomeDB" id="Q7RTS3"/>
<dbReference type="TreeFam" id="TF315153"/>
<dbReference type="PathwayCommons" id="Q7RTS3"/>
<dbReference type="Reactome" id="R-HSA-210747">
    <property type="pathway name" value="Regulation of gene expression in early pancreatic precursor cells"/>
</dbReference>
<dbReference type="Reactome" id="R-HSA-9925561">
    <property type="pathway name" value="Developmental Lineage of Pancreatic Acinar Cells"/>
</dbReference>
<dbReference type="SignaLink" id="Q7RTS3"/>
<dbReference type="SIGNOR" id="Q7RTS3"/>
<dbReference type="BioGRID-ORCS" id="256297">
    <property type="hits" value="16 hits in 1167 CRISPR screens"/>
</dbReference>
<dbReference type="GeneWiki" id="PTF1A"/>
<dbReference type="GenomeRNAi" id="256297"/>
<dbReference type="Pharos" id="Q7RTS3">
    <property type="development level" value="Tbio"/>
</dbReference>
<dbReference type="PRO" id="PR:Q7RTS3"/>
<dbReference type="Proteomes" id="UP000005640">
    <property type="component" value="Chromosome 10"/>
</dbReference>
<dbReference type="RNAct" id="Q7RTS3">
    <property type="molecule type" value="protein"/>
</dbReference>
<dbReference type="Bgee" id="ENSG00000168267">
    <property type="expression patterns" value="Expressed in body of pancreas and 71 other cell types or tissues"/>
</dbReference>
<dbReference type="ExpressionAtlas" id="Q7RTS3">
    <property type="expression patterns" value="baseline and differential"/>
</dbReference>
<dbReference type="GO" id="GO:0000785">
    <property type="term" value="C:chromatin"/>
    <property type="evidence" value="ECO:0000247"/>
    <property type="project" value="NTNU_SB"/>
</dbReference>
<dbReference type="GO" id="GO:0005737">
    <property type="term" value="C:cytoplasm"/>
    <property type="evidence" value="ECO:0000250"/>
    <property type="project" value="UniProtKB"/>
</dbReference>
<dbReference type="GO" id="GO:0005634">
    <property type="term" value="C:nucleus"/>
    <property type="evidence" value="ECO:0000250"/>
    <property type="project" value="UniProtKB"/>
</dbReference>
<dbReference type="GO" id="GO:0005667">
    <property type="term" value="C:transcription regulator complex"/>
    <property type="evidence" value="ECO:0000250"/>
    <property type="project" value="UniProtKB"/>
</dbReference>
<dbReference type="GO" id="GO:0003682">
    <property type="term" value="F:chromatin binding"/>
    <property type="evidence" value="ECO:0007669"/>
    <property type="project" value="Ensembl"/>
</dbReference>
<dbReference type="GO" id="GO:0003677">
    <property type="term" value="F:DNA binding"/>
    <property type="evidence" value="ECO:0000250"/>
    <property type="project" value="UniProtKB"/>
</dbReference>
<dbReference type="GO" id="GO:0001228">
    <property type="term" value="F:DNA-binding transcription activator activity, RNA polymerase II-specific"/>
    <property type="evidence" value="ECO:0007669"/>
    <property type="project" value="Ensembl"/>
</dbReference>
<dbReference type="GO" id="GO:0000981">
    <property type="term" value="F:DNA-binding transcription factor activity, RNA polymerase II-specific"/>
    <property type="evidence" value="ECO:0000247"/>
    <property type="project" value="NTNU_SB"/>
</dbReference>
<dbReference type="GO" id="GO:0070888">
    <property type="term" value="F:E-box binding"/>
    <property type="evidence" value="ECO:0007669"/>
    <property type="project" value="Ensembl"/>
</dbReference>
<dbReference type="GO" id="GO:0046983">
    <property type="term" value="F:protein dimerization activity"/>
    <property type="evidence" value="ECO:0007669"/>
    <property type="project" value="InterPro"/>
</dbReference>
<dbReference type="GO" id="GO:0000977">
    <property type="term" value="F:RNA polymerase II transcription regulatory region sequence-specific DNA binding"/>
    <property type="evidence" value="ECO:0000318"/>
    <property type="project" value="GO_Central"/>
</dbReference>
<dbReference type="GO" id="GO:1990837">
    <property type="term" value="F:sequence-specific double-stranded DNA binding"/>
    <property type="evidence" value="ECO:0000314"/>
    <property type="project" value="ARUK-UCL"/>
</dbReference>
<dbReference type="GO" id="GO:0035881">
    <property type="term" value="P:amacrine cell differentiation"/>
    <property type="evidence" value="ECO:0000250"/>
    <property type="project" value="UniProtKB"/>
</dbReference>
<dbReference type="GO" id="GO:0021549">
    <property type="term" value="P:cerebellum development"/>
    <property type="evidence" value="ECO:0000315"/>
    <property type="project" value="UniProtKB"/>
</dbReference>
<dbReference type="GO" id="GO:0032502">
    <property type="term" value="P:developmental process"/>
    <property type="evidence" value="ECO:0000318"/>
    <property type="project" value="GO_Central"/>
</dbReference>
<dbReference type="GO" id="GO:0031017">
    <property type="term" value="P:exocrine pancreas development"/>
    <property type="evidence" value="ECO:0000250"/>
    <property type="project" value="UniProtKB"/>
</dbReference>
<dbReference type="GO" id="GO:0048663">
    <property type="term" value="P:neuron fate commitment"/>
    <property type="evidence" value="ECO:0007669"/>
    <property type="project" value="Ensembl"/>
</dbReference>
<dbReference type="GO" id="GO:0031016">
    <property type="term" value="P:pancreas development"/>
    <property type="evidence" value="ECO:0000315"/>
    <property type="project" value="UniProtKB"/>
</dbReference>
<dbReference type="GO" id="GO:0006355">
    <property type="term" value="P:regulation of DNA-templated transcription"/>
    <property type="evidence" value="ECO:0000250"/>
    <property type="project" value="UniProtKB"/>
</dbReference>
<dbReference type="GO" id="GO:0061074">
    <property type="term" value="P:regulation of neural retina development"/>
    <property type="evidence" value="ECO:0000250"/>
    <property type="project" value="UniProtKB"/>
</dbReference>
<dbReference type="GO" id="GO:0006357">
    <property type="term" value="P:regulation of transcription by RNA polymerase II"/>
    <property type="evidence" value="ECO:0000318"/>
    <property type="project" value="GO_Central"/>
</dbReference>
<dbReference type="GO" id="GO:0010842">
    <property type="term" value="P:retina layer formation"/>
    <property type="evidence" value="ECO:0000250"/>
    <property type="project" value="UniProtKB"/>
</dbReference>
<dbReference type="GO" id="GO:0048384">
    <property type="term" value="P:retinoic acid receptor signaling pathway"/>
    <property type="evidence" value="ECO:0007669"/>
    <property type="project" value="Ensembl"/>
</dbReference>
<dbReference type="GO" id="GO:0009888">
    <property type="term" value="P:tissue development"/>
    <property type="evidence" value="ECO:0000314"/>
    <property type="project" value="UniProtKB"/>
</dbReference>
<dbReference type="GO" id="GO:0006366">
    <property type="term" value="P:transcription by RNA polymerase II"/>
    <property type="evidence" value="ECO:0007669"/>
    <property type="project" value="Ensembl"/>
</dbReference>
<dbReference type="CDD" id="cd11417">
    <property type="entry name" value="bHLH_TS_PTF1A"/>
    <property type="match status" value="1"/>
</dbReference>
<dbReference type="FunFam" id="4.10.280.10:FF:000035">
    <property type="entry name" value="Pancreas-specific transcription factor 1a"/>
    <property type="match status" value="1"/>
</dbReference>
<dbReference type="Gene3D" id="4.10.280.10">
    <property type="entry name" value="Helix-loop-helix DNA-binding domain"/>
    <property type="match status" value="1"/>
</dbReference>
<dbReference type="InterPro" id="IPR011598">
    <property type="entry name" value="bHLH_dom"/>
</dbReference>
<dbReference type="InterPro" id="IPR050283">
    <property type="entry name" value="E-box_TF_Regulators"/>
</dbReference>
<dbReference type="InterPro" id="IPR036638">
    <property type="entry name" value="HLH_DNA-bd_sf"/>
</dbReference>
<dbReference type="PANTHER" id="PTHR23349">
    <property type="entry name" value="BASIC HELIX-LOOP-HELIX TRANSCRIPTION FACTOR, TWIST"/>
    <property type="match status" value="1"/>
</dbReference>
<dbReference type="PANTHER" id="PTHR23349:SF59">
    <property type="entry name" value="PANCREAS TRANSCRIPTION FACTOR 1 SUBUNIT ALPHA"/>
    <property type="match status" value="1"/>
</dbReference>
<dbReference type="Pfam" id="PF00010">
    <property type="entry name" value="HLH"/>
    <property type="match status" value="1"/>
</dbReference>
<dbReference type="SMART" id="SM00353">
    <property type="entry name" value="HLH"/>
    <property type="match status" value="1"/>
</dbReference>
<dbReference type="SUPFAM" id="SSF47459">
    <property type="entry name" value="HLH, helix-loop-helix DNA-binding domain"/>
    <property type="match status" value="1"/>
</dbReference>
<dbReference type="PROSITE" id="PS50888">
    <property type="entry name" value="BHLH"/>
    <property type="match status" value="1"/>
</dbReference>
<evidence type="ECO:0000250" key="1"/>
<evidence type="ECO:0000255" key="2">
    <source>
        <dbReference type="PROSITE-ProRule" id="PRU00981"/>
    </source>
</evidence>
<evidence type="ECO:0000256" key="3">
    <source>
        <dbReference type="SAM" id="MobiDB-lite"/>
    </source>
</evidence>
<evidence type="ECO:0000269" key="4">
    <source>
    </source>
</evidence>
<evidence type="ECO:0000269" key="5">
    <source>
    </source>
</evidence>
<evidence type="ECO:0000269" key="6">
    <source>
    </source>
</evidence>
<reference key="1">
    <citation type="journal article" date="2004" name="Nature">
        <title>The DNA sequence and comparative analysis of human chromosome 10.</title>
        <authorList>
            <person name="Deloukas P."/>
            <person name="Earthrowl M.E."/>
            <person name="Grafham D.V."/>
            <person name="Rubenfield M."/>
            <person name="French L."/>
            <person name="Steward C.A."/>
            <person name="Sims S.K."/>
            <person name="Jones M.C."/>
            <person name="Searle S."/>
            <person name="Scott C."/>
            <person name="Howe K."/>
            <person name="Hunt S.E."/>
            <person name="Andrews T.D."/>
            <person name="Gilbert J.G.R."/>
            <person name="Swarbreck D."/>
            <person name="Ashurst J.L."/>
            <person name="Taylor A."/>
            <person name="Battles J."/>
            <person name="Bird C.P."/>
            <person name="Ainscough R."/>
            <person name="Almeida J.P."/>
            <person name="Ashwell R.I.S."/>
            <person name="Ambrose K.D."/>
            <person name="Babbage A.K."/>
            <person name="Bagguley C.L."/>
            <person name="Bailey J."/>
            <person name="Banerjee R."/>
            <person name="Bates K."/>
            <person name="Beasley H."/>
            <person name="Bray-Allen S."/>
            <person name="Brown A.J."/>
            <person name="Brown J.Y."/>
            <person name="Burford D.C."/>
            <person name="Burrill W."/>
            <person name="Burton J."/>
            <person name="Cahill P."/>
            <person name="Camire D."/>
            <person name="Carter N.P."/>
            <person name="Chapman J.C."/>
            <person name="Clark S.Y."/>
            <person name="Clarke G."/>
            <person name="Clee C.M."/>
            <person name="Clegg S."/>
            <person name="Corby N."/>
            <person name="Coulson A."/>
            <person name="Dhami P."/>
            <person name="Dutta I."/>
            <person name="Dunn M."/>
            <person name="Faulkner L."/>
            <person name="Frankish A."/>
            <person name="Frankland J.A."/>
            <person name="Garner P."/>
            <person name="Garnett J."/>
            <person name="Gribble S."/>
            <person name="Griffiths C."/>
            <person name="Grocock R."/>
            <person name="Gustafson E."/>
            <person name="Hammond S."/>
            <person name="Harley J.L."/>
            <person name="Hart E."/>
            <person name="Heath P.D."/>
            <person name="Ho T.P."/>
            <person name="Hopkins B."/>
            <person name="Horne J."/>
            <person name="Howden P.J."/>
            <person name="Huckle E."/>
            <person name="Hynds C."/>
            <person name="Johnson C."/>
            <person name="Johnson D."/>
            <person name="Kana A."/>
            <person name="Kay M."/>
            <person name="Kimberley A.M."/>
            <person name="Kershaw J.K."/>
            <person name="Kokkinaki M."/>
            <person name="Laird G.K."/>
            <person name="Lawlor S."/>
            <person name="Lee H.M."/>
            <person name="Leongamornlert D.A."/>
            <person name="Laird G."/>
            <person name="Lloyd C."/>
            <person name="Lloyd D.M."/>
            <person name="Loveland J."/>
            <person name="Lovell J."/>
            <person name="McLaren S."/>
            <person name="McLay K.E."/>
            <person name="McMurray A."/>
            <person name="Mashreghi-Mohammadi M."/>
            <person name="Matthews L."/>
            <person name="Milne S."/>
            <person name="Nickerson T."/>
            <person name="Nguyen M."/>
            <person name="Overton-Larty E."/>
            <person name="Palmer S.A."/>
            <person name="Pearce A.V."/>
            <person name="Peck A.I."/>
            <person name="Pelan S."/>
            <person name="Phillimore B."/>
            <person name="Porter K."/>
            <person name="Rice C.M."/>
            <person name="Rogosin A."/>
            <person name="Ross M.T."/>
            <person name="Sarafidou T."/>
            <person name="Sehra H.K."/>
            <person name="Shownkeen R."/>
            <person name="Skuce C.D."/>
            <person name="Smith M."/>
            <person name="Standring L."/>
            <person name="Sycamore N."/>
            <person name="Tester J."/>
            <person name="Thorpe A."/>
            <person name="Torcasso W."/>
            <person name="Tracey A."/>
            <person name="Tromans A."/>
            <person name="Tsolas J."/>
            <person name="Wall M."/>
            <person name="Walsh J."/>
            <person name="Wang H."/>
            <person name="Weinstock K."/>
            <person name="West A.P."/>
            <person name="Willey D.L."/>
            <person name="Whitehead S.L."/>
            <person name="Wilming L."/>
            <person name="Wray P.W."/>
            <person name="Young L."/>
            <person name="Chen Y."/>
            <person name="Lovering R.C."/>
            <person name="Moschonas N.K."/>
            <person name="Siebert R."/>
            <person name="Fechtel K."/>
            <person name="Bentley D."/>
            <person name="Durbin R.M."/>
            <person name="Hubbard T."/>
            <person name="Doucette-Stamm L."/>
            <person name="Beck S."/>
            <person name="Smith D.R."/>
            <person name="Rogers J."/>
        </authorList>
    </citation>
    <scope>NUCLEOTIDE SEQUENCE [LARGE SCALE GENOMIC DNA]</scope>
</reference>
<reference key="2">
    <citation type="journal article" date="2000" name="Cell Growth Differ.">
        <title>Role of the basic helix-loop-helix transcription factor p48 in the differentiation phenotype of exocrine pancreas cancer cells.</title>
        <authorList>
            <person name="Adell T."/>
            <person name="Gomez-Cuadrado A."/>
            <person name="Skoudy A."/>
            <person name="Pettengill O.S."/>
            <person name="Longnecker D.S."/>
            <person name="Real F.X."/>
        </authorList>
    </citation>
    <scope>NUCLEOTIDE SEQUENCE [MRNA] OF 168-215</scope>
    <scope>FUNCTION</scope>
    <scope>SUBCELLULAR LOCATION</scope>
    <scope>TISSUE SPECIFICITY</scope>
</reference>
<reference key="3">
    <citation type="journal article" date="2002" name="Gene Expr. Patterns">
        <title>Exhaustive identification of human class II basic helix-loop-helix proteins by virtual library screening.</title>
        <authorList>
            <person name="McLellan A.S."/>
            <person name="Langlands K."/>
            <person name="Kealey T."/>
        </authorList>
    </citation>
    <scope>IDENTIFICATION</scope>
</reference>
<reference key="4">
    <citation type="journal article" date="2004" name="Nat. Genet.">
        <title>Mutations in PTF1A cause pancreatic and cerebellar agenesis.</title>
        <authorList>
            <person name="Sellick G.S."/>
            <person name="Barker K.T."/>
            <person name="Stolte-Dijkstra I."/>
            <person name="Fleischmann C."/>
            <person name="Coleman R.J."/>
            <person name="Garrett C."/>
            <person name="Gloyn A.L."/>
            <person name="Edghill E.L."/>
            <person name="Hattersley A.T."/>
            <person name="Wellauer P.K."/>
            <person name="Goodwin G."/>
            <person name="Houlston R.S."/>
        </authorList>
    </citation>
    <scope>INVOLVEMENT IN PACA</scope>
    <scope>FUNCTION IN PANCREAS AND CEREBELLAR DEVELOPMENT</scope>
</reference>
<reference key="5">
    <citation type="journal article" date="2014" name="Nat. Genet.">
        <title>Recessive mutations in a distal PTF1A enhancer cause isolated pancreatic agenesis.</title>
        <authorList>
            <consortium name="International Pancreatic Agenesis Consortium"/>
            <person name="Weedon M.N."/>
            <person name="Cebola I."/>
            <person name="Patch A.M."/>
            <person name="Flanagan S.E."/>
            <person name="De Franco E."/>
            <person name="Caswell R."/>
            <person name="Rodriguez-Segui S.A."/>
            <person name="Shaw-Smith C."/>
            <person name="Cho C.H."/>
            <person name="Lango Allen H."/>
            <person name="Houghton J.A."/>
            <person name="Roth C.L."/>
            <person name="Chen R."/>
            <person name="Hussain K."/>
            <person name="Marsh P."/>
            <person name="Vallier L."/>
            <person name="Murray A."/>
            <person name="Ellard S."/>
            <person name="Ferrer J."/>
            <person name="Hattersley A.T."/>
        </authorList>
    </citation>
    <scope>INVOLVEMENT IN PAGEN2</scope>
</reference>
<protein>
    <recommendedName>
        <fullName>Pancreas transcription factor 1 subunit alpha</fullName>
    </recommendedName>
    <alternativeName>
        <fullName>Class A basic helix-loop-helix protein 29</fullName>
        <shortName>bHLHa29</shortName>
    </alternativeName>
    <alternativeName>
        <fullName>Pancreas-specific transcription factor 1a</fullName>
    </alternativeName>
    <alternativeName>
        <fullName>bHLH transcription factor p48</fullName>
    </alternativeName>
    <alternativeName>
        <fullName>p48 DNA-binding subunit of transcription factor PTF1</fullName>
        <shortName>PTF1-p48</shortName>
    </alternativeName>
</protein>
<comment type="function">
    <text evidence="4 5">Transcription factor implicated in the cell fate determination in various organs. Binds to the E-box consensus sequence 5'-CANNTG-3'. Plays a role in early and late pancreas development and differentiation. Important for determining whether cells allocated to the pancreatic buds continue towards pancreatic organogenesis or revert back to duodenal fates. May be involved in the maintenance of exocrine pancreas-specific gene expression including ELA1 and amylase. Required for the formation of pancreatic acinar and ductal cells. Plays an important role in cerebellar development. Directly regulated by FOXN4 and RORC during retinal development, FOXN4-PTF1A pathway plays a central role in directing the differentiation of retinal progenitors towards horizontal and amacrine fates.</text>
</comment>
<comment type="subunit">
    <text evidence="1">Component of the pancreas transcription factor 1 complex (PTF1) which is composed of TCF3/p75, TCF12/p64 and PTF1A/p48. TCF3 is responsible for the nuclear import of the p48/p64 complex. Interacts with TCF3 and RBPSUH/RBP-Jkappa (By similarity).</text>
</comment>
<comment type="subcellular location">
    <subcellularLocation>
        <location evidence="2">Nucleus</location>
    </subcellularLocation>
    <subcellularLocation>
        <location evidence="1">Cytoplasm</location>
    </subcellularLocation>
    <text evidence="1">In chronic pancreatitis associated with pancreas cancer preferentially accumulates in the cytoplasm of acinar/ductular complexes. In the cytoplasm loses its ability to form the PTF1 complex (By similarity).</text>
</comment>
<comment type="tissue specificity">
    <text evidence="4">Pancreas-specific (at protein level). Loss of expression is seen in ductal type pancreas cancers.</text>
</comment>
<comment type="disease" evidence="5">
    <disease id="DI-01484">
        <name>Pancreatic and cerebellar agenesis</name>
        <acronym>PACA</acronym>
        <description>A disease characterized by neonatal diabetes mellitus, cerebellar agenesis or hypoplasia, severe intrauterine growth retardation, the presence of very little subcutaneous fat, and dysmorphic facial features.</description>
        <dbReference type="MIM" id="609069"/>
    </disease>
    <text>The disease is caused by variants affecting the gene represented in this entry.</text>
</comment>
<comment type="disease" evidence="6">
    <disease id="DI-04182">
        <name>Pancreatic agenesis 2</name>
        <acronym>PAGEN2</acronym>
        <description>A disease characterized by isolated hypoplasia or agenesis of the pancreas, pancreatic beta-cell failure resulting in neonatal insulin-dependent diabetes mellitus, and exocrine pancreatic insufficiency.</description>
        <dbReference type="MIM" id="615935"/>
    </disease>
    <text evidence="6">The disease is caused by variants affecting the gene represented in this entry. In some families with pancreatic agenesis, disease causing mutations affect the sequence and activity of an enhancer region of 400-bp located 25 kb downstream of PTF1A (PubMed:24212882).</text>
</comment>
<comment type="miscellaneous">
    <text>An excellent marker of acinar cell differentiation in the pancreas.</text>
</comment>
<gene>
    <name type="primary">PTF1A</name>
    <name type="synonym">BHLHA29</name>
    <name type="synonym">PTF1P48</name>
</gene>
<organism>
    <name type="scientific">Homo sapiens</name>
    <name type="common">Human</name>
    <dbReference type="NCBI Taxonomy" id="9606"/>
    <lineage>
        <taxon>Eukaryota</taxon>
        <taxon>Metazoa</taxon>
        <taxon>Chordata</taxon>
        <taxon>Craniata</taxon>
        <taxon>Vertebrata</taxon>
        <taxon>Euteleostomi</taxon>
        <taxon>Mammalia</taxon>
        <taxon>Eutheria</taxon>
        <taxon>Euarchontoglires</taxon>
        <taxon>Primates</taxon>
        <taxon>Haplorrhini</taxon>
        <taxon>Catarrhini</taxon>
        <taxon>Hominidae</taxon>
        <taxon>Homo</taxon>
    </lineage>
</organism>
<proteinExistence type="evidence at protein level"/>
<sequence>MDAVLLEHFPGGLDAFPSSYFDEDDFFTDQSSRDPLEDGDELLADEQAEVEFLSHQLHEYCYRDGACLLLQPAPPAAPLALAPPSSGGLGEPDDGGGGGYCCETGAPPGGFPYSPGSPPSCLAYPCAGAAVLSPGARLRGLSGAAAAAARRRRRVRSEAELQQLRQAANVRERRRMQSINDAFEGLRSHIPTLPYEKRLSKVDTLRLAIGYINFLSELVQADLPLRGGGAGGCGGPGGGGRLGGDSPGSQAQKVIICHRGTRSPSPSDPDYGLPPLAGHSLSWTDEKQLKEQNIIRTAKVWTPEDPRKLNSKSSFNNIENEPPFEFVS</sequence>
<keyword id="KW-0963">Cytoplasm</keyword>
<keyword id="KW-0217">Developmental protein</keyword>
<keyword id="KW-0219">Diabetes mellitus</keyword>
<keyword id="KW-0221">Differentiation</keyword>
<keyword id="KW-0238">DNA-binding</keyword>
<keyword id="KW-0524">Neurogenesis</keyword>
<keyword id="KW-0539">Nucleus</keyword>
<keyword id="KW-1267">Proteomics identification</keyword>
<keyword id="KW-1185">Reference proteome</keyword>
<keyword id="KW-0804">Transcription</keyword>
<keyword id="KW-0805">Transcription regulation</keyword>
<feature type="chain" id="PRO_0000233143" description="Pancreas transcription factor 1 subunit alpha">
    <location>
        <begin position="1"/>
        <end position="328"/>
    </location>
</feature>
<feature type="domain" description="bHLH" evidence="2">
    <location>
        <begin position="163"/>
        <end position="215"/>
    </location>
</feature>
<feature type="region of interest" description="Disordered" evidence="3">
    <location>
        <begin position="259"/>
        <end position="278"/>
    </location>
</feature>
<feature type="region of interest" description="Disordered" evidence="3">
    <location>
        <begin position="305"/>
        <end position="328"/>
    </location>
</feature>
<feature type="sequence variant" id="VAR_049548" description="In dbSNP:rs7918487.">
    <original>S</original>
    <variation>P</variation>
    <location>
        <position position="263"/>
    </location>
</feature>